<reference key="1">
    <citation type="journal article" date="2006" name="J. Bacteriol.">
        <title>Whole-genome sequence of Listeria welshimeri reveals common steps in genome reduction with Listeria innocua as compared to Listeria monocytogenes.</title>
        <authorList>
            <person name="Hain T."/>
            <person name="Steinweg C."/>
            <person name="Kuenne C.T."/>
            <person name="Billion A."/>
            <person name="Ghai R."/>
            <person name="Chatterjee S.S."/>
            <person name="Domann E."/>
            <person name="Kaerst U."/>
            <person name="Goesmann A."/>
            <person name="Bekel T."/>
            <person name="Bartels D."/>
            <person name="Kaiser O."/>
            <person name="Meyer F."/>
            <person name="Puehler A."/>
            <person name="Weisshaar B."/>
            <person name="Wehland J."/>
            <person name="Liang C."/>
            <person name="Dandekar T."/>
            <person name="Lampidis R."/>
            <person name="Kreft J."/>
            <person name="Goebel W."/>
            <person name="Chakraborty T."/>
        </authorList>
    </citation>
    <scope>NUCLEOTIDE SEQUENCE [LARGE SCALE GENOMIC DNA]</scope>
    <source>
        <strain>ATCC 35897 / DSM 20650 / CCUG 15529 / CIP 8149 / NCTC 11857 / SLCC 5334 / V8</strain>
    </source>
</reference>
<evidence type="ECO:0000255" key="1">
    <source>
        <dbReference type="HAMAP-Rule" id="MF_01124"/>
    </source>
</evidence>
<organism>
    <name type="scientific">Listeria welshimeri serovar 6b (strain ATCC 35897 / DSM 20650 / CCUG 15529 / CIP 8149 / NCTC 11857 / SLCC 5334 / V8)</name>
    <dbReference type="NCBI Taxonomy" id="386043"/>
    <lineage>
        <taxon>Bacteria</taxon>
        <taxon>Bacillati</taxon>
        <taxon>Bacillota</taxon>
        <taxon>Bacilli</taxon>
        <taxon>Bacillales</taxon>
        <taxon>Listeriaceae</taxon>
        <taxon>Listeria</taxon>
    </lineage>
</organism>
<feature type="chain" id="PRO_1000065343" description="Adapter protein MecA">
    <location>
        <begin position="1"/>
        <end position="217"/>
    </location>
</feature>
<protein>
    <recommendedName>
        <fullName evidence="1">Adapter protein MecA</fullName>
    </recommendedName>
</protein>
<comment type="function">
    <text evidence="1">Enables the recognition and targeting of unfolded and aggregated proteins to the ClpC protease or to other proteins involved in proteolysis.</text>
</comment>
<comment type="subunit">
    <text evidence="1">Homodimer.</text>
</comment>
<comment type="domain">
    <text>The N-terminal domain probably binds unfolded/aggregated proteins; the C-terminal domain interacts with ClpC.</text>
</comment>
<comment type="similarity">
    <text evidence="1">Belongs to the MecA family.</text>
</comment>
<sequence length="217" mass="25413">MEIERINEDTIKFYISYLDLEERGFNQEDVWYDREKSEELFWDMMDELKYEEEFSPEGPLWIQVQALKHGLEVFVTKATIGGKGEDGFDVTLSSPDELAEEKIEKLLEENFNPVKKESLGEDDTLEFILEFRDFEDVISLSRATGLENLLTKLYSYQGKYYLNVEFPENKYDESNIDNAVSILLEYGLESNLTGYMLAEYGKVIFDVPALQQVRKHF</sequence>
<gene>
    <name evidence="1" type="primary">mecA</name>
    <name type="ordered locus">lwe2207</name>
</gene>
<name>MECA_LISW6</name>
<dbReference type="EMBL" id="AM263198">
    <property type="protein sequence ID" value="CAK21625.1"/>
    <property type="molecule type" value="Genomic_DNA"/>
</dbReference>
<dbReference type="RefSeq" id="WP_011702961.1">
    <property type="nucleotide sequence ID" value="NC_008555.1"/>
</dbReference>
<dbReference type="SMR" id="A0AKU3"/>
<dbReference type="STRING" id="386043.lwe2207"/>
<dbReference type="GeneID" id="61190110"/>
<dbReference type="KEGG" id="lwe:lwe2207"/>
<dbReference type="eggNOG" id="COG4862">
    <property type="taxonomic scope" value="Bacteria"/>
</dbReference>
<dbReference type="HOGENOM" id="CLU_071496_2_1_9"/>
<dbReference type="OrthoDB" id="2360201at2"/>
<dbReference type="Proteomes" id="UP000000779">
    <property type="component" value="Chromosome"/>
</dbReference>
<dbReference type="GO" id="GO:0030674">
    <property type="term" value="F:protein-macromolecule adaptor activity"/>
    <property type="evidence" value="ECO:0007669"/>
    <property type="project" value="UniProtKB-UniRule"/>
</dbReference>
<dbReference type="Gene3D" id="3.30.70.1950">
    <property type="match status" value="1"/>
</dbReference>
<dbReference type="HAMAP" id="MF_01124">
    <property type="entry name" value="MecA"/>
    <property type="match status" value="1"/>
</dbReference>
<dbReference type="InterPro" id="IPR038471">
    <property type="entry name" value="MecA_C_sf"/>
</dbReference>
<dbReference type="InterPro" id="IPR008681">
    <property type="entry name" value="Neg-reg_MecA"/>
</dbReference>
<dbReference type="NCBIfam" id="NF002644">
    <property type="entry name" value="PRK02315.1-5"/>
    <property type="match status" value="1"/>
</dbReference>
<dbReference type="PANTHER" id="PTHR39161">
    <property type="entry name" value="ADAPTER PROTEIN MECA"/>
    <property type="match status" value="1"/>
</dbReference>
<dbReference type="PANTHER" id="PTHR39161:SF1">
    <property type="entry name" value="ADAPTER PROTEIN MECA 1"/>
    <property type="match status" value="1"/>
</dbReference>
<dbReference type="Pfam" id="PF05389">
    <property type="entry name" value="MecA"/>
    <property type="match status" value="1"/>
</dbReference>
<dbReference type="PIRSF" id="PIRSF029008">
    <property type="entry name" value="MecA"/>
    <property type="match status" value="1"/>
</dbReference>
<accession>A0AKU3</accession>
<proteinExistence type="inferred from homology"/>